<organism>
    <name type="scientific">Xenopus laevis</name>
    <name type="common">African clawed frog</name>
    <dbReference type="NCBI Taxonomy" id="8355"/>
    <lineage>
        <taxon>Eukaryota</taxon>
        <taxon>Metazoa</taxon>
        <taxon>Chordata</taxon>
        <taxon>Craniata</taxon>
        <taxon>Vertebrata</taxon>
        <taxon>Euteleostomi</taxon>
        <taxon>Amphibia</taxon>
        <taxon>Batrachia</taxon>
        <taxon>Anura</taxon>
        <taxon>Pipoidea</taxon>
        <taxon>Pipidae</taxon>
        <taxon>Xenopodinae</taxon>
        <taxon>Xenopus</taxon>
        <taxon>Xenopus</taxon>
    </lineage>
</organism>
<reference key="1">
    <citation type="submission" date="2006-10" db="EMBL/GenBank/DDBJ databases">
        <authorList>
            <consortium name="NIH - Xenopus Gene Collection (XGC) project"/>
        </authorList>
    </citation>
    <scope>NUCLEOTIDE SEQUENCE [LARGE SCALE MRNA]</scope>
    <source>
        <tissue>Fat body</tissue>
    </source>
</reference>
<keyword id="KW-0084">Basement membrane</keyword>
<keyword id="KW-0106">Calcium</keyword>
<keyword id="KW-0156">Chromatin regulator</keyword>
<keyword id="KW-0158">Chromosome</keyword>
<keyword id="KW-0186">Copper</keyword>
<keyword id="KW-1015">Disulfide bond</keyword>
<keyword id="KW-0256">Endoplasmic reticulum</keyword>
<keyword id="KW-0272">Extracellular matrix</keyword>
<keyword id="KW-0325">Glycoprotein</keyword>
<keyword id="KW-0886">LTQ</keyword>
<keyword id="KW-0479">Metal-binding</keyword>
<keyword id="KW-0539">Nucleus</keyword>
<keyword id="KW-0560">Oxidoreductase</keyword>
<keyword id="KW-1185">Reference proteome</keyword>
<keyword id="KW-0677">Repeat</keyword>
<keyword id="KW-0678">Repressor</keyword>
<keyword id="KW-0964">Secreted</keyword>
<keyword id="KW-0732">Signal</keyword>
<keyword id="KW-0801">TPQ</keyword>
<keyword id="KW-0804">Transcription</keyword>
<keyword id="KW-0805">Transcription regulation</keyword>
<name>LOXL2_XENLA</name>
<feature type="signal peptide" evidence="5">
    <location>
        <begin position="1"/>
        <end position="19"/>
    </location>
</feature>
<feature type="chain" id="PRO_0000418006" description="Lysyl oxidase homolog 2">
    <location>
        <begin position="20"/>
        <end position="765"/>
    </location>
</feature>
<feature type="domain" description="SRCR 1" evidence="6">
    <location>
        <begin position="49"/>
        <end position="150"/>
    </location>
</feature>
<feature type="domain" description="SRCR 2" evidence="6">
    <location>
        <begin position="179"/>
        <end position="293"/>
    </location>
</feature>
<feature type="domain" description="SRCR 3" evidence="6">
    <location>
        <begin position="317"/>
        <end position="416"/>
    </location>
</feature>
<feature type="domain" description="SRCR 4" evidence="6">
    <location>
        <begin position="426"/>
        <end position="535"/>
    </location>
</feature>
<feature type="region of interest" description="Lysyl-oxidase like" evidence="1">
    <location>
        <begin position="539"/>
        <end position="742"/>
    </location>
</feature>
<feature type="binding site" evidence="4">
    <location>
        <position position="540"/>
    </location>
    <ligand>
        <name>Ca(2+)</name>
        <dbReference type="ChEBI" id="CHEBI:29108"/>
    </ligand>
</feature>
<feature type="binding site" evidence="4">
    <location>
        <position position="541"/>
    </location>
    <ligand>
        <name>Ca(2+)</name>
        <dbReference type="ChEBI" id="CHEBI:29108"/>
    </ligand>
</feature>
<feature type="binding site" evidence="4">
    <location>
        <position position="617"/>
    </location>
    <ligand>
        <name>Cu cation</name>
        <dbReference type="ChEBI" id="CHEBI:23378"/>
    </ligand>
</feature>
<feature type="binding site" evidence="4">
    <location>
        <position position="619"/>
    </location>
    <ligand>
        <name>Cu cation</name>
        <dbReference type="ChEBI" id="CHEBI:23378"/>
    </ligand>
</feature>
<feature type="binding site" evidence="4">
    <location>
        <position position="621"/>
    </location>
    <ligand>
        <name>Cu cation</name>
        <dbReference type="ChEBI" id="CHEBI:23378"/>
    </ligand>
</feature>
<feature type="binding site" evidence="4">
    <location>
        <position position="713"/>
    </location>
    <ligand>
        <name>Ca(2+)</name>
        <dbReference type="ChEBI" id="CHEBI:29108"/>
    </ligand>
</feature>
<feature type="binding site" evidence="4">
    <location>
        <position position="715"/>
    </location>
    <ligand>
        <name>Ca(2+)</name>
        <dbReference type="ChEBI" id="CHEBI:29108"/>
    </ligand>
</feature>
<feature type="binding site" evidence="4">
    <location>
        <position position="718"/>
    </location>
    <ligand>
        <name>Ca(2+)</name>
        <dbReference type="ChEBI" id="CHEBI:29108"/>
    </ligand>
</feature>
<feature type="binding site" evidence="4">
    <location>
        <position position="719"/>
    </location>
    <ligand>
        <name>Ca(2+)</name>
        <dbReference type="ChEBI" id="CHEBI:29108"/>
    </ligand>
</feature>
<feature type="modified residue" description="2',4',5'-topaquinone" evidence="2">
    <location>
        <position position="680"/>
    </location>
</feature>
<feature type="glycosylation site" description="N-linked (GlcNAc...) asparagine" evidence="5">
    <location>
        <position position="279"/>
    </location>
</feature>
<feature type="glycosylation site" description="N-linked (GlcNAc...) asparagine" evidence="5">
    <location>
        <position position="446"/>
    </location>
</feature>
<feature type="glycosylation site" description="N-linked (GlcNAc...) asparagine" evidence="5">
    <location>
        <position position="635"/>
    </location>
</feature>
<feature type="disulfide bond" evidence="6">
    <location>
        <begin position="75"/>
        <end position="139"/>
    </location>
</feature>
<feature type="disulfide bond" evidence="6">
    <location>
        <begin position="88"/>
        <end position="149"/>
    </location>
</feature>
<feature type="disulfide bond" evidence="6">
    <location>
        <begin position="119"/>
        <end position="129"/>
    </location>
</feature>
<feature type="disulfide bond" evidence="6">
    <location>
        <begin position="209"/>
        <end position="282"/>
    </location>
</feature>
<feature type="disulfide bond" evidence="6">
    <location>
        <begin position="222"/>
        <end position="292"/>
    </location>
</feature>
<feature type="disulfide bond" evidence="6">
    <location>
        <begin position="256"/>
        <end position="266"/>
    </location>
</feature>
<feature type="disulfide bond" evidence="6">
    <location>
        <begin position="342"/>
        <end position="405"/>
    </location>
</feature>
<feature type="disulfide bond" evidence="6">
    <location>
        <begin position="355"/>
        <end position="415"/>
    </location>
</feature>
<feature type="disulfide bond" evidence="6">
    <location>
        <begin position="386"/>
        <end position="396"/>
    </location>
</feature>
<feature type="disulfide bond" evidence="6">
    <location>
        <begin position="455"/>
        <end position="521"/>
    </location>
</feature>
<feature type="disulfide bond" evidence="6">
    <location>
        <begin position="468"/>
        <end position="534"/>
    </location>
</feature>
<feature type="disulfide bond" evidence="6">
    <location>
        <begin position="502"/>
        <end position="512"/>
    </location>
</feature>
<feature type="disulfide bond" evidence="4">
    <location>
        <begin position="564"/>
        <end position="616"/>
    </location>
</feature>
<feature type="disulfide bond" evidence="4">
    <location>
        <begin position="570"/>
        <end position="686"/>
    </location>
</feature>
<feature type="disulfide bond" evidence="4">
    <location>
        <begin position="648"/>
        <end position="664"/>
    </location>
</feature>
<feature type="disulfide bond" evidence="4">
    <location>
        <begin position="654"/>
        <end position="676"/>
    </location>
</feature>
<feature type="disulfide bond" evidence="6">
    <location>
        <begin position="723"/>
        <end position="737"/>
    </location>
</feature>
<feature type="cross-link" description="Lysine tyrosylquinone (Lys-Tyr)" evidence="2">
    <location>
        <begin position="644"/>
        <end position="680"/>
    </location>
</feature>
<sequence>MLVSHVFLLTLSLSVPSLGQYEHWPYYPEYQGPPEPPPTQPKIVPQIHVRLAGEKRKHNEGRVEVYYEGEWGTVCDDDFSMYAAHIVCRELGYQEAVSWSPSSKYGKGEGRIWLDNVNCNGRERSIASCSSNGWGVTDCKHSEDVGVQCSDRRIPGFKVSNELPGHLEGLNIQVEDVRIRPILSAYRKRVPVTEGFAEVKVQGSWRQVCNTQWSSKNSRVVCGMFGFPSEKKYNTKVYKMFSSRRKHTYWQFSANCTGNEPHLSSCKVGGVLSPDPKTNQTCSDGAPAVVSCTPGRAFAPSPGTGFRKAFRQEQPLVRLRGGANVGEGRVEVLKNGEWGTVCDDKWNLVTASVICRELGFGSAKEALVGAQLGQGMGQIHMSEIQCNGFEKSLTDCKFNIHSQGCNHEEDAAVRCNVPAMGFENQVRLSGGRHPTEGRVEVLMERNGTLRWGTVCSETWGTMEAMIVCRQLGLGFASHAFQETWYWQGDINADDVVMSGVKCSGTEMSLAHCRHDGANVNCPRGGGRFAAGVSCVETAPDLVLNAALVEQTTYLEDRPMFMLQCAHEEQCLASSADRTSPTTGYRRLLRFSSQIHNNGQADFRPKTGRHAWIWHDCHRHYHSMEVFTHYDLLTLNGTKVAEGHKASFCLEDSECEADIQKQYVCANFGEQGITVGCWDLYRHDIDCQWVDITDVAPGDYFFQIIINPNQEVAESDYTNNIMKCRCRYDGQRIWMYNCHIGGSYSTETEEKFEHFSGLLNNQLSTR</sequence>
<accession>Q08B63</accession>
<gene>
    <name type="primary">loxl2</name>
</gene>
<dbReference type="EC" id="1.4.3.13" evidence="4"/>
<dbReference type="EMBL" id="BC124862">
    <property type="protein sequence ID" value="AAI24863.1"/>
    <property type="molecule type" value="mRNA"/>
</dbReference>
<dbReference type="RefSeq" id="NP_001121257.1">
    <property type="nucleotide sequence ID" value="NM_001127785.1"/>
</dbReference>
<dbReference type="SMR" id="Q08B63"/>
<dbReference type="GlyCosmos" id="Q08B63">
    <property type="glycosylation" value="3 sites, No reported glycans"/>
</dbReference>
<dbReference type="DNASU" id="100158339"/>
<dbReference type="GeneID" id="100158339"/>
<dbReference type="KEGG" id="xla:100158339"/>
<dbReference type="AGR" id="Xenbase:XB-GENE-1010778"/>
<dbReference type="CTD" id="100158339"/>
<dbReference type="Xenbase" id="XB-GENE-1010778">
    <property type="gene designation" value="loxl2.L"/>
</dbReference>
<dbReference type="OrthoDB" id="547291at2759"/>
<dbReference type="Proteomes" id="UP000186698">
    <property type="component" value="Chromosome 3L"/>
</dbReference>
<dbReference type="Bgee" id="100158339">
    <property type="expression patterns" value="Expressed in internal ear and 15 other cell types or tissues"/>
</dbReference>
<dbReference type="GO" id="GO:0005604">
    <property type="term" value="C:basement membrane"/>
    <property type="evidence" value="ECO:0000250"/>
    <property type="project" value="UniProtKB"/>
</dbReference>
<dbReference type="GO" id="GO:0000785">
    <property type="term" value="C:chromatin"/>
    <property type="evidence" value="ECO:0000250"/>
    <property type="project" value="UniProtKB"/>
</dbReference>
<dbReference type="GO" id="GO:0062023">
    <property type="term" value="C:collagen-containing extracellular matrix"/>
    <property type="evidence" value="ECO:0000318"/>
    <property type="project" value="GO_Central"/>
</dbReference>
<dbReference type="GO" id="GO:0005783">
    <property type="term" value="C:endoplasmic reticulum"/>
    <property type="evidence" value="ECO:0000250"/>
    <property type="project" value="UniProtKB"/>
</dbReference>
<dbReference type="GO" id="GO:0005615">
    <property type="term" value="C:extracellular space"/>
    <property type="evidence" value="ECO:0000250"/>
    <property type="project" value="UniProtKB"/>
</dbReference>
<dbReference type="GO" id="GO:0016020">
    <property type="term" value="C:membrane"/>
    <property type="evidence" value="ECO:0007669"/>
    <property type="project" value="InterPro"/>
</dbReference>
<dbReference type="GO" id="GO:0005634">
    <property type="term" value="C:nucleus"/>
    <property type="evidence" value="ECO:0000250"/>
    <property type="project" value="UniProtKB"/>
</dbReference>
<dbReference type="GO" id="GO:0005509">
    <property type="term" value="F:calcium ion binding"/>
    <property type="evidence" value="ECO:0000250"/>
    <property type="project" value="UniProtKB"/>
</dbReference>
<dbReference type="GO" id="GO:0005507">
    <property type="term" value="F:copper ion binding"/>
    <property type="evidence" value="ECO:0000250"/>
    <property type="project" value="UniProtKB"/>
</dbReference>
<dbReference type="GO" id="GO:0070492">
    <property type="term" value="F:oligosaccharide binding"/>
    <property type="evidence" value="ECO:0000250"/>
    <property type="project" value="UniProtKB"/>
</dbReference>
<dbReference type="GO" id="GO:0004720">
    <property type="term" value="F:protein-lysine 6-oxidase activity"/>
    <property type="evidence" value="ECO:0000250"/>
    <property type="project" value="UniProtKB"/>
</dbReference>
<dbReference type="GO" id="GO:0030199">
    <property type="term" value="P:collagen fibril organization"/>
    <property type="evidence" value="ECO:0000250"/>
    <property type="project" value="UniProtKB"/>
</dbReference>
<dbReference type="GO" id="GO:0043542">
    <property type="term" value="P:endothelial cell migration"/>
    <property type="evidence" value="ECO:0000250"/>
    <property type="project" value="UniProtKB"/>
</dbReference>
<dbReference type="GO" id="GO:0001935">
    <property type="term" value="P:endothelial cell proliferation"/>
    <property type="evidence" value="ECO:0000250"/>
    <property type="project" value="UniProtKB"/>
</dbReference>
<dbReference type="GO" id="GO:0001837">
    <property type="term" value="P:epithelial to mesenchymal transition"/>
    <property type="evidence" value="ECO:0000250"/>
    <property type="project" value="UniProtKB"/>
</dbReference>
<dbReference type="GO" id="GO:0070828">
    <property type="term" value="P:heterochromatin organization"/>
    <property type="evidence" value="ECO:0000250"/>
    <property type="project" value="UniProtKB"/>
</dbReference>
<dbReference type="GO" id="GO:0045892">
    <property type="term" value="P:negative regulation of DNA-templated transcription"/>
    <property type="evidence" value="ECO:0000250"/>
    <property type="project" value="UniProtKB"/>
</dbReference>
<dbReference type="GO" id="GO:1902455">
    <property type="term" value="P:negative regulation of stem cell population maintenance"/>
    <property type="evidence" value="ECO:0000250"/>
    <property type="project" value="UniProtKB"/>
</dbReference>
<dbReference type="GO" id="GO:0000122">
    <property type="term" value="P:negative regulation of transcription by RNA polymerase II"/>
    <property type="evidence" value="ECO:0000250"/>
    <property type="project" value="UniProtKB"/>
</dbReference>
<dbReference type="GO" id="GO:0018057">
    <property type="term" value="P:peptidyl-lysine oxidation"/>
    <property type="evidence" value="ECO:0000250"/>
    <property type="project" value="UniProtKB"/>
</dbReference>
<dbReference type="GO" id="GO:0032332">
    <property type="term" value="P:positive regulation of chondrocyte differentiation"/>
    <property type="evidence" value="ECO:0000250"/>
    <property type="project" value="UniProtKB"/>
</dbReference>
<dbReference type="GO" id="GO:0010718">
    <property type="term" value="P:positive regulation of epithelial to mesenchymal transition"/>
    <property type="evidence" value="ECO:0000250"/>
    <property type="project" value="UniProtKB"/>
</dbReference>
<dbReference type="GO" id="GO:0036211">
    <property type="term" value="P:protein modification process"/>
    <property type="evidence" value="ECO:0000250"/>
    <property type="project" value="UniProtKB"/>
</dbReference>
<dbReference type="GO" id="GO:0046688">
    <property type="term" value="P:response to copper ion"/>
    <property type="evidence" value="ECO:0000250"/>
    <property type="project" value="UniProtKB"/>
</dbReference>
<dbReference type="GO" id="GO:0001666">
    <property type="term" value="P:response to hypoxia"/>
    <property type="evidence" value="ECO:0000250"/>
    <property type="project" value="UniProtKB"/>
</dbReference>
<dbReference type="GO" id="GO:0002040">
    <property type="term" value="P:sprouting angiogenesis"/>
    <property type="evidence" value="ECO:0000250"/>
    <property type="project" value="UniProtKB"/>
</dbReference>
<dbReference type="FunFam" id="3.10.250.10:FF:000001">
    <property type="entry name" value="Lysyl oxidase 4 isoform X1"/>
    <property type="match status" value="2"/>
</dbReference>
<dbReference type="FunFam" id="3.10.250.10:FF:000008">
    <property type="entry name" value="Lysyl oxidase homolog 2"/>
    <property type="match status" value="1"/>
</dbReference>
<dbReference type="Gene3D" id="3.10.250.10">
    <property type="entry name" value="SRCR-like domain"/>
    <property type="match status" value="4"/>
</dbReference>
<dbReference type="InterPro" id="IPR050912">
    <property type="entry name" value="LOX-like_protein"/>
</dbReference>
<dbReference type="InterPro" id="IPR001695">
    <property type="entry name" value="Lysyl_oxidase"/>
</dbReference>
<dbReference type="InterPro" id="IPR019828">
    <property type="entry name" value="Lysyl_oxidase_CS"/>
</dbReference>
<dbReference type="InterPro" id="IPR001190">
    <property type="entry name" value="SRCR"/>
</dbReference>
<dbReference type="InterPro" id="IPR036772">
    <property type="entry name" value="SRCR-like_dom_sf"/>
</dbReference>
<dbReference type="PANTHER" id="PTHR45817:SF1">
    <property type="entry name" value="LYSYL OXIDASE HOMOLOG 2"/>
    <property type="match status" value="1"/>
</dbReference>
<dbReference type="PANTHER" id="PTHR45817">
    <property type="entry name" value="LYSYL OXIDASE-LIKE-RELATED"/>
    <property type="match status" value="1"/>
</dbReference>
<dbReference type="Pfam" id="PF01186">
    <property type="entry name" value="Lysyl_oxidase"/>
    <property type="match status" value="1"/>
</dbReference>
<dbReference type="Pfam" id="PF00530">
    <property type="entry name" value="SRCR"/>
    <property type="match status" value="4"/>
</dbReference>
<dbReference type="PRINTS" id="PR00074">
    <property type="entry name" value="LYSYLOXIDASE"/>
</dbReference>
<dbReference type="PRINTS" id="PR00258">
    <property type="entry name" value="SPERACTRCPTR"/>
</dbReference>
<dbReference type="SMART" id="SM00202">
    <property type="entry name" value="SR"/>
    <property type="match status" value="4"/>
</dbReference>
<dbReference type="SUPFAM" id="SSF56487">
    <property type="entry name" value="SRCR-like"/>
    <property type="match status" value="4"/>
</dbReference>
<dbReference type="PROSITE" id="PS00926">
    <property type="entry name" value="LYSYL_OXIDASE"/>
    <property type="match status" value="1"/>
</dbReference>
<dbReference type="PROSITE" id="PS00420">
    <property type="entry name" value="SRCR_1"/>
    <property type="match status" value="1"/>
</dbReference>
<dbReference type="PROSITE" id="PS50287">
    <property type="entry name" value="SRCR_2"/>
    <property type="match status" value="4"/>
</dbReference>
<proteinExistence type="evidence at transcript level"/>
<comment type="function">
    <text evidence="3 4">Mediates the post-translational oxidative deamination of lysine residues on target proteins leading to the formation of deaminated lysine (allysine). Acts as a transcription corepressor and specifically mediates deamination of trimethylated 'Lys-4' of histone H3 (H3K4me3), a specific tag for epigenetic transcriptional activation. Shows no activity against histone H3 when it is trimethylated on 'Lys-9' (H3K9me3) or 'Lys-27' (H3K27me3) or when 'Lys-4' is monomethylated (H3K4me1) or dimethylated (H3K4me2). Also mediates deamination of methylated TAF10, a member of the transcription factor IID (TFIID) complex, which induces release of TAF10 from promoters, leading to inhibition of TFIID-dependent transcription. LOXL2-mediated deamination of TAF10 results in transcriptional repression of genes required for embryonic stem cell pluripotency. Involved in epithelial to mesenchymal transition (EMT) and participates in repression of E-cadherin, probably by mediating deamination of histone H3. When secreted into the extracellular matrix, promotes cross-linking of extracellular matrix proteins by mediating oxidative deamination of peptidyl lysine residues in precursors to fibrous collagen and elastin. Acts as a regulator of sprouting angiogenesis, probably via collagen IV scaffolding. Acts as a regulator of chondrocyte differentiation, probably by regulating expression of factors that control chondrocyte differentiation.</text>
</comment>
<comment type="catalytic activity">
    <reaction evidence="4">
        <text>L-lysyl-[protein] + O2 + H2O = (S)-2-amino-6-oxohexanoyl-[protein] + H2O2 + NH4(+)</text>
        <dbReference type="Rhea" id="RHEA:24544"/>
        <dbReference type="Rhea" id="RHEA-COMP:9752"/>
        <dbReference type="Rhea" id="RHEA-COMP:12448"/>
        <dbReference type="ChEBI" id="CHEBI:15377"/>
        <dbReference type="ChEBI" id="CHEBI:15379"/>
        <dbReference type="ChEBI" id="CHEBI:16240"/>
        <dbReference type="ChEBI" id="CHEBI:28938"/>
        <dbReference type="ChEBI" id="CHEBI:29969"/>
        <dbReference type="ChEBI" id="CHEBI:131803"/>
        <dbReference type="EC" id="1.4.3.13"/>
    </reaction>
</comment>
<comment type="cofactor">
    <cofactor evidence="4">
        <name>Cu cation</name>
        <dbReference type="ChEBI" id="CHEBI:23378"/>
    </cofactor>
</comment>
<comment type="cofactor">
    <cofactor evidence="4">
        <name>lysine tyrosylquinone residue</name>
        <dbReference type="ChEBI" id="CHEBI:20489"/>
    </cofactor>
    <text evidence="2 4">Contains 1 lysine tyrosylquinone.</text>
</comment>
<comment type="subcellular location">
    <subcellularLocation>
        <location evidence="4">Secreted</location>
        <location evidence="4">Extracellular space</location>
        <location evidence="4">Extracellular matrix</location>
        <location evidence="4">Basement membrane</location>
    </subcellularLocation>
    <subcellularLocation>
        <location evidence="4">Nucleus</location>
    </subcellularLocation>
    <subcellularLocation>
        <location evidence="4">Chromosome</location>
    </subcellularLocation>
    <subcellularLocation>
        <location evidence="4">Endoplasmic reticulum</location>
    </subcellularLocation>
    <text evidence="4">Associated with chromatin. It is unclear how LOXL2 is nuclear as it contains a signal sequence and has been shown to be secreted. However, a number of reports confirm its intracellular location and its key role in transcription regulation.</text>
</comment>
<comment type="PTM">
    <text evidence="4">The lysine tyrosylquinone cross-link (LTQ) is generated by condensation of the epsilon-amino group of a lysine with a topaquinone produced by oxidation of tyrosine.</text>
</comment>
<comment type="similarity">
    <text evidence="7">Belongs to the lysyl oxidase family.</text>
</comment>
<evidence type="ECO:0000250" key="1"/>
<evidence type="ECO:0000250" key="2">
    <source>
        <dbReference type="UniProtKB" id="P33072"/>
    </source>
</evidence>
<evidence type="ECO:0000250" key="3">
    <source>
        <dbReference type="UniProtKB" id="P58022"/>
    </source>
</evidence>
<evidence type="ECO:0000250" key="4">
    <source>
        <dbReference type="UniProtKB" id="Q9Y4K0"/>
    </source>
</evidence>
<evidence type="ECO:0000255" key="5"/>
<evidence type="ECO:0000255" key="6">
    <source>
        <dbReference type="PROSITE-ProRule" id="PRU00196"/>
    </source>
</evidence>
<evidence type="ECO:0000305" key="7"/>
<protein>
    <recommendedName>
        <fullName>Lysyl oxidase homolog 2</fullName>
        <ecNumber evidence="4">1.4.3.13</ecNumber>
    </recommendedName>
    <alternativeName>
        <fullName>Lysyl oxidase-like protein 2</fullName>
    </alternativeName>
</protein>